<comment type="function">
    <text evidence="1">Endonuclease that specifically degrades the RNA of RNA-DNA hybrids.</text>
</comment>
<comment type="catalytic activity">
    <reaction evidence="1">
        <text>Endonucleolytic cleavage to 5'-phosphomonoester.</text>
        <dbReference type="EC" id="3.1.26.4"/>
    </reaction>
</comment>
<comment type="cofactor">
    <cofactor evidence="1">
        <name>Mg(2+)</name>
        <dbReference type="ChEBI" id="CHEBI:18420"/>
    </cofactor>
    <text evidence="1">Binds 1 Mg(2+) ion per subunit. May bind a second metal ion at a regulatory site, or after substrate binding.</text>
</comment>
<comment type="subunit">
    <text evidence="1">Monomer.</text>
</comment>
<comment type="subcellular location">
    <subcellularLocation>
        <location evidence="1">Cytoplasm</location>
    </subcellularLocation>
</comment>
<comment type="similarity">
    <text evidence="1">Belongs to the RNase H family.</text>
</comment>
<feature type="chain" id="PRO_0000332685" description="Ribonuclease H">
    <location>
        <begin position="1"/>
        <end position="145"/>
    </location>
</feature>
<feature type="domain" description="RNase H type-1" evidence="2">
    <location>
        <begin position="1"/>
        <end position="141"/>
    </location>
</feature>
<feature type="binding site" evidence="1">
    <location>
        <position position="9"/>
    </location>
    <ligand>
        <name>Mg(2+)</name>
        <dbReference type="ChEBI" id="CHEBI:18420"/>
        <label>1</label>
    </ligand>
</feature>
<feature type="binding site" evidence="1">
    <location>
        <position position="9"/>
    </location>
    <ligand>
        <name>Mg(2+)</name>
        <dbReference type="ChEBI" id="CHEBI:18420"/>
        <label>2</label>
    </ligand>
</feature>
<feature type="binding site" evidence="1">
    <location>
        <position position="47"/>
    </location>
    <ligand>
        <name>Mg(2+)</name>
        <dbReference type="ChEBI" id="CHEBI:18420"/>
        <label>1</label>
    </ligand>
</feature>
<feature type="binding site" evidence="1">
    <location>
        <position position="69"/>
    </location>
    <ligand>
        <name>Mg(2+)</name>
        <dbReference type="ChEBI" id="CHEBI:18420"/>
        <label>1</label>
    </ligand>
</feature>
<feature type="binding site" evidence="1">
    <location>
        <position position="133"/>
    </location>
    <ligand>
        <name>Mg(2+)</name>
        <dbReference type="ChEBI" id="CHEBI:18420"/>
        <label>2</label>
    </ligand>
</feature>
<dbReference type="EC" id="3.1.26.4" evidence="1"/>
<dbReference type="EMBL" id="CP000109">
    <property type="protein sequence ID" value="ABB41524.1"/>
    <property type="molecule type" value="Genomic_DNA"/>
</dbReference>
<dbReference type="SMR" id="Q31H49"/>
<dbReference type="STRING" id="317025.Tcr_0928"/>
<dbReference type="KEGG" id="tcx:Tcr_0928"/>
<dbReference type="eggNOG" id="COG0328">
    <property type="taxonomic scope" value="Bacteria"/>
</dbReference>
<dbReference type="HOGENOM" id="CLU_030894_6_0_6"/>
<dbReference type="OrthoDB" id="7845843at2"/>
<dbReference type="GO" id="GO:0005737">
    <property type="term" value="C:cytoplasm"/>
    <property type="evidence" value="ECO:0007669"/>
    <property type="project" value="UniProtKB-SubCell"/>
</dbReference>
<dbReference type="GO" id="GO:0000287">
    <property type="term" value="F:magnesium ion binding"/>
    <property type="evidence" value="ECO:0007669"/>
    <property type="project" value="UniProtKB-UniRule"/>
</dbReference>
<dbReference type="GO" id="GO:0003676">
    <property type="term" value="F:nucleic acid binding"/>
    <property type="evidence" value="ECO:0007669"/>
    <property type="project" value="InterPro"/>
</dbReference>
<dbReference type="GO" id="GO:0004523">
    <property type="term" value="F:RNA-DNA hybrid ribonuclease activity"/>
    <property type="evidence" value="ECO:0007669"/>
    <property type="project" value="UniProtKB-UniRule"/>
</dbReference>
<dbReference type="GO" id="GO:0043137">
    <property type="term" value="P:DNA replication, removal of RNA primer"/>
    <property type="evidence" value="ECO:0007669"/>
    <property type="project" value="TreeGrafter"/>
</dbReference>
<dbReference type="CDD" id="cd09278">
    <property type="entry name" value="RNase_HI_prokaryote_like"/>
    <property type="match status" value="1"/>
</dbReference>
<dbReference type="FunFam" id="3.30.420.10:FF:000089">
    <property type="entry name" value="Ribonuclease H"/>
    <property type="match status" value="1"/>
</dbReference>
<dbReference type="Gene3D" id="3.30.420.10">
    <property type="entry name" value="Ribonuclease H-like superfamily/Ribonuclease H"/>
    <property type="match status" value="1"/>
</dbReference>
<dbReference type="HAMAP" id="MF_00042">
    <property type="entry name" value="RNase_H"/>
    <property type="match status" value="1"/>
</dbReference>
<dbReference type="InterPro" id="IPR050092">
    <property type="entry name" value="RNase_H"/>
</dbReference>
<dbReference type="InterPro" id="IPR012337">
    <property type="entry name" value="RNaseH-like_sf"/>
</dbReference>
<dbReference type="InterPro" id="IPR002156">
    <property type="entry name" value="RNaseH_domain"/>
</dbReference>
<dbReference type="InterPro" id="IPR036397">
    <property type="entry name" value="RNaseH_sf"/>
</dbReference>
<dbReference type="InterPro" id="IPR022892">
    <property type="entry name" value="RNaseHI"/>
</dbReference>
<dbReference type="NCBIfam" id="NF001236">
    <property type="entry name" value="PRK00203.1"/>
    <property type="match status" value="1"/>
</dbReference>
<dbReference type="PANTHER" id="PTHR10642">
    <property type="entry name" value="RIBONUCLEASE H1"/>
    <property type="match status" value="1"/>
</dbReference>
<dbReference type="PANTHER" id="PTHR10642:SF26">
    <property type="entry name" value="RIBONUCLEASE H1"/>
    <property type="match status" value="1"/>
</dbReference>
<dbReference type="Pfam" id="PF00075">
    <property type="entry name" value="RNase_H"/>
    <property type="match status" value="1"/>
</dbReference>
<dbReference type="SUPFAM" id="SSF53098">
    <property type="entry name" value="Ribonuclease H-like"/>
    <property type="match status" value="1"/>
</dbReference>
<dbReference type="PROSITE" id="PS50879">
    <property type="entry name" value="RNASE_H_1"/>
    <property type="match status" value="1"/>
</dbReference>
<sequence>MQEVELFTDGGCRGNPGPGGWGALLRFGGVEKELKGAELDTTNNRMELTAAIEGLKALKRPCKVTLTTDSQYVKNGITQWMTNWKKNNWKTAAKKPVKNKDLWQALDEALQPHDVTWAWVKGHSGHDENERVDELANQAMDELTG</sequence>
<protein>
    <recommendedName>
        <fullName evidence="1">Ribonuclease H</fullName>
        <shortName evidence="1">RNase H</shortName>
        <ecNumber evidence="1">3.1.26.4</ecNumber>
    </recommendedName>
</protein>
<proteinExistence type="inferred from homology"/>
<reference key="1">
    <citation type="journal article" date="2006" name="PLoS Biol.">
        <title>The genome of deep-sea vent chemolithoautotroph Thiomicrospira crunogena XCL-2.</title>
        <authorList>
            <person name="Scott K.M."/>
            <person name="Sievert S.M."/>
            <person name="Abril F.N."/>
            <person name="Ball L.A."/>
            <person name="Barrett C.J."/>
            <person name="Blake R.A."/>
            <person name="Boller A.J."/>
            <person name="Chain P.S.G."/>
            <person name="Clark J.A."/>
            <person name="Davis C.R."/>
            <person name="Detter C."/>
            <person name="Do K.F."/>
            <person name="Dobrinski K.P."/>
            <person name="Faza B.I."/>
            <person name="Fitzpatrick K.A."/>
            <person name="Freyermuth S.K."/>
            <person name="Harmer T.L."/>
            <person name="Hauser L.J."/>
            <person name="Huegler M."/>
            <person name="Kerfeld C.A."/>
            <person name="Klotz M.G."/>
            <person name="Kong W.W."/>
            <person name="Land M."/>
            <person name="Lapidus A."/>
            <person name="Larimer F.W."/>
            <person name="Longo D.L."/>
            <person name="Lucas S."/>
            <person name="Malfatti S.A."/>
            <person name="Massey S.E."/>
            <person name="Martin D.D."/>
            <person name="McCuddin Z."/>
            <person name="Meyer F."/>
            <person name="Moore J.L."/>
            <person name="Ocampo L.H. Jr."/>
            <person name="Paul J.H."/>
            <person name="Paulsen I.T."/>
            <person name="Reep D.K."/>
            <person name="Ren Q."/>
            <person name="Ross R.L."/>
            <person name="Sato P.Y."/>
            <person name="Thomas P."/>
            <person name="Tinkham L.E."/>
            <person name="Zeruth G.T."/>
        </authorList>
    </citation>
    <scope>NUCLEOTIDE SEQUENCE [LARGE SCALE GENOMIC DNA]</scope>
    <source>
        <strain>DSM 25203 / XCL-2</strain>
    </source>
</reference>
<keyword id="KW-0963">Cytoplasm</keyword>
<keyword id="KW-0255">Endonuclease</keyword>
<keyword id="KW-0378">Hydrolase</keyword>
<keyword id="KW-0460">Magnesium</keyword>
<keyword id="KW-0479">Metal-binding</keyword>
<keyword id="KW-0540">Nuclease</keyword>
<gene>
    <name evidence="1" type="primary">rnhA</name>
    <name type="ordered locus">Tcr_0928</name>
</gene>
<evidence type="ECO:0000255" key="1">
    <source>
        <dbReference type="HAMAP-Rule" id="MF_00042"/>
    </source>
</evidence>
<evidence type="ECO:0000255" key="2">
    <source>
        <dbReference type="PROSITE-ProRule" id="PRU00408"/>
    </source>
</evidence>
<name>RNH_HYDCU</name>
<organism>
    <name type="scientific">Hydrogenovibrio crunogenus (strain DSM 25203 / XCL-2)</name>
    <name type="common">Thiomicrospira crunogena</name>
    <dbReference type="NCBI Taxonomy" id="317025"/>
    <lineage>
        <taxon>Bacteria</taxon>
        <taxon>Pseudomonadati</taxon>
        <taxon>Pseudomonadota</taxon>
        <taxon>Gammaproteobacteria</taxon>
        <taxon>Thiotrichales</taxon>
        <taxon>Piscirickettsiaceae</taxon>
        <taxon>Hydrogenovibrio</taxon>
    </lineage>
</organism>
<accession>Q31H49</accession>